<reference key="1">
    <citation type="journal article" date="2008" name="J. Bacteriol.">
        <title>Complete genome sequence of Neisseria gonorrhoeae NCCP11945.</title>
        <authorList>
            <person name="Chung G.T."/>
            <person name="Yoo J.S."/>
            <person name="Oh H.B."/>
            <person name="Lee Y.S."/>
            <person name="Cha S.H."/>
            <person name="Kim S.J."/>
            <person name="Yoo C.K."/>
        </authorList>
    </citation>
    <scope>NUCLEOTIDE SEQUENCE [LARGE SCALE GENOMIC DNA]</scope>
    <source>
        <strain>NCCP11945</strain>
    </source>
</reference>
<accession>B4RMZ1</accession>
<proteinExistence type="inferred from homology"/>
<name>RIMP_NEIG2</name>
<evidence type="ECO:0000255" key="1">
    <source>
        <dbReference type="HAMAP-Rule" id="MF_01077"/>
    </source>
</evidence>
<evidence type="ECO:0000305" key="2"/>
<protein>
    <recommendedName>
        <fullName evidence="1">Ribosome maturation factor RimP</fullName>
    </recommendedName>
</protein>
<keyword id="KW-0963">Cytoplasm</keyword>
<keyword id="KW-0690">Ribosome biogenesis</keyword>
<sequence length="149" mass="16460">MYIGSSMDIQTILEKTLPGLGYELVDFELAAQGTLRVFIDKEGGITVEDCATVSNHLSRVFMVEDIGYKNLEISSPGLDRPLKKAADFVRFAGQNAKIKTRLPIGGQKNFIGKIEGCENDTVTVSFDGKTVQIELGNIDKARLRPEFKF</sequence>
<organism>
    <name type="scientific">Neisseria gonorrhoeae (strain NCCP11945)</name>
    <dbReference type="NCBI Taxonomy" id="521006"/>
    <lineage>
        <taxon>Bacteria</taxon>
        <taxon>Pseudomonadati</taxon>
        <taxon>Pseudomonadota</taxon>
        <taxon>Betaproteobacteria</taxon>
        <taxon>Neisseriales</taxon>
        <taxon>Neisseriaceae</taxon>
        <taxon>Neisseria</taxon>
    </lineage>
</organism>
<feature type="chain" id="PRO_0000384717" description="Ribosome maturation factor RimP">
    <location>
        <begin position="1"/>
        <end position="149"/>
    </location>
</feature>
<gene>
    <name evidence="1" type="primary">rimP</name>
    <name type="ordered locus">NGK_1501</name>
</gene>
<comment type="function">
    <text evidence="1">Required for maturation of 30S ribosomal subunits.</text>
</comment>
<comment type="subcellular location">
    <subcellularLocation>
        <location evidence="1">Cytoplasm</location>
    </subcellularLocation>
</comment>
<comment type="similarity">
    <text evidence="1">Belongs to the RimP family.</text>
</comment>
<comment type="sequence caution" evidence="2">
    <conflict type="erroneous initiation">
        <sequence resource="EMBL-CDS" id="ACF30159"/>
    </conflict>
</comment>
<dbReference type="EMBL" id="CP001050">
    <property type="protein sequence ID" value="ACF30159.1"/>
    <property type="status" value="ALT_INIT"/>
    <property type="molecule type" value="Genomic_DNA"/>
</dbReference>
<dbReference type="SMR" id="B4RMZ1"/>
<dbReference type="KEGG" id="ngk:NGK_1501"/>
<dbReference type="HOGENOM" id="CLU_070525_1_0_4"/>
<dbReference type="Proteomes" id="UP000002564">
    <property type="component" value="Chromosome"/>
</dbReference>
<dbReference type="GO" id="GO:0005829">
    <property type="term" value="C:cytosol"/>
    <property type="evidence" value="ECO:0007669"/>
    <property type="project" value="TreeGrafter"/>
</dbReference>
<dbReference type="GO" id="GO:0000028">
    <property type="term" value="P:ribosomal small subunit assembly"/>
    <property type="evidence" value="ECO:0007669"/>
    <property type="project" value="TreeGrafter"/>
</dbReference>
<dbReference type="GO" id="GO:0006412">
    <property type="term" value="P:translation"/>
    <property type="evidence" value="ECO:0007669"/>
    <property type="project" value="TreeGrafter"/>
</dbReference>
<dbReference type="CDD" id="cd01734">
    <property type="entry name" value="YlxS_C"/>
    <property type="match status" value="1"/>
</dbReference>
<dbReference type="FunFam" id="3.30.300.70:FF:000008">
    <property type="entry name" value="Ribosome maturation factor RimP"/>
    <property type="match status" value="1"/>
</dbReference>
<dbReference type="Gene3D" id="2.30.30.180">
    <property type="entry name" value="Ribosome maturation factor RimP, C-terminal domain"/>
    <property type="match status" value="1"/>
</dbReference>
<dbReference type="Gene3D" id="3.30.300.70">
    <property type="entry name" value="RimP-like superfamily, N-terminal"/>
    <property type="match status" value="1"/>
</dbReference>
<dbReference type="HAMAP" id="MF_01077">
    <property type="entry name" value="RimP"/>
    <property type="match status" value="1"/>
</dbReference>
<dbReference type="InterPro" id="IPR003728">
    <property type="entry name" value="Ribosome_maturation_RimP"/>
</dbReference>
<dbReference type="InterPro" id="IPR028998">
    <property type="entry name" value="RimP_C"/>
</dbReference>
<dbReference type="InterPro" id="IPR036847">
    <property type="entry name" value="RimP_C_sf"/>
</dbReference>
<dbReference type="InterPro" id="IPR028989">
    <property type="entry name" value="RimP_N"/>
</dbReference>
<dbReference type="InterPro" id="IPR035956">
    <property type="entry name" value="RimP_N_sf"/>
</dbReference>
<dbReference type="NCBIfam" id="NF000929">
    <property type="entry name" value="PRK00092.2-1"/>
    <property type="match status" value="1"/>
</dbReference>
<dbReference type="PANTHER" id="PTHR33867">
    <property type="entry name" value="RIBOSOME MATURATION FACTOR RIMP"/>
    <property type="match status" value="1"/>
</dbReference>
<dbReference type="PANTHER" id="PTHR33867:SF1">
    <property type="entry name" value="RIBOSOME MATURATION FACTOR RIMP"/>
    <property type="match status" value="1"/>
</dbReference>
<dbReference type="Pfam" id="PF17384">
    <property type="entry name" value="DUF150_C"/>
    <property type="match status" value="1"/>
</dbReference>
<dbReference type="Pfam" id="PF02576">
    <property type="entry name" value="RimP_N"/>
    <property type="match status" value="1"/>
</dbReference>
<dbReference type="SUPFAM" id="SSF74942">
    <property type="entry name" value="YhbC-like, C-terminal domain"/>
    <property type="match status" value="1"/>
</dbReference>
<dbReference type="SUPFAM" id="SSF75420">
    <property type="entry name" value="YhbC-like, N-terminal domain"/>
    <property type="match status" value="1"/>
</dbReference>